<organismHost>
    <name type="scientific">Homo sapiens</name>
    <name type="common">Human</name>
    <dbReference type="NCBI Taxonomy" id="9606"/>
</organismHost>
<dbReference type="EMBL" id="M14119">
    <property type="protein sequence ID" value="AAA46933.1"/>
    <property type="molecule type" value="Genomic_DNA"/>
</dbReference>
<dbReference type="PIR" id="A03681">
    <property type="entry name" value="W5WL1B"/>
</dbReference>
<dbReference type="SMR" id="P69901"/>
<dbReference type="IntAct" id="P69901">
    <property type="interactions" value="232"/>
</dbReference>
<dbReference type="MINT" id="P69901"/>
<dbReference type="Proteomes" id="UP000008222">
    <property type="component" value="Genome"/>
</dbReference>
<dbReference type="InterPro" id="IPR035154">
    <property type="entry name" value="DUF5472"/>
</dbReference>
<dbReference type="Pfam" id="PF17566">
    <property type="entry name" value="DUF5472"/>
    <property type="match status" value="1"/>
</dbReference>
<name>VE5B_HPV11</name>
<proteinExistence type="predicted"/>
<sequence>MVMLTCHLNDGDTWLFLWLFTAFVVAVLGLLLLHYRAVHGTEKTKCAKCKSNRNTTVDYVYMSHGDNGDYVYMN</sequence>
<organism>
    <name type="scientific">Human papillomavirus 11</name>
    <dbReference type="NCBI Taxonomy" id="10580"/>
    <lineage>
        <taxon>Viruses</taxon>
        <taxon>Monodnaviria</taxon>
        <taxon>Shotokuvirae</taxon>
        <taxon>Cossaviricota</taxon>
        <taxon>Papovaviricetes</taxon>
        <taxon>Zurhausenvirales</taxon>
        <taxon>Papillomaviridae</taxon>
        <taxon>Firstpapillomavirinae</taxon>
        <taxon>Alphapapillomavirus</taxon>
        <taxon>Alphapapillomavirus 10</taxon>
    </lineage>
</organism>
<keyword id="KW-0244">Early protein</keyword>
<keyword id="KW-1185">Reference proteome</keyword>
<reference key="1">
    <citation type="journal article" date="1986" name="Virology">
        <title>The nucleotide sequence and genome organization of human papilloma virus type 11.</title>
        <authorList>
            <person name="Dartmann K."/>
            <person name="Schwarz E."/>
            <person name="Gissmann L."/>
            <person name="zur Hausen H."/>
        </authorList>
    </citation>
    <scope>NUCLEOTIDE SEQUENCE [GENOMIC DNA]</scope>
</reference>
<protein>
    <recommendedName>
        <fullName>Probable protein E5B</fullName>
    </recommendedName>
</protein>
<accession>P69901</accession>
<accession>P04018</accession>
<feature type="chain" id="PRO_0000133314" description="Probable protein E5B">
    <location>
        <begin position="1"/>
        <end position="74"/>
    </location>
</feature>